<accession>B8DH28</accession>
<feature type="chain" id="PRO_1000116287" description="Argininosuccinate synthase">
    <location>
        <begin position="1"/>
        <end position="404"/>
    </location>
</feature>
<feature type="binding site" evidence="1">
    <location>
        <begin position="9"/>
        <end position="17"/>
    </location>
    <ligand>
        <name>ATP</name>
        <dbReference type="ChEBI" id="CHEBI:30616"/>
    </ligand>
</feature>
<feature type="binding site" evidence="1">
    <location>
        <position position="86"/>
    </location>
    <ligand>
        <name>L-citrulline</name>
        <dbReference type="ChEBI" id="CHEBI:57743"/>
    </ligand>
</feature>
<feature type="binding site" evidence="1">
    <location>
        <position position="116"/>
    </location>
    <ligand>
        <name>ATP</name>
        <dbReference type="ChEBI" id="CHEBI:30616"/>
    </ligand>
</feature>
<feature type="binding site" evidence="1">
    <location>
        <position position="118"/>
    </location>
    <ligand>
        <name>L-aspartate</name>
        <dbReference type="ChEBI" id="CHEBI:29991"/>
    </ligand>
</feature>
<feature type="binding site" evidence="1">
    <location>
        <position position="122"/>
    </location>
    <ligand>
        <name>L-aspartate</name>
        <dbReference type="ChEBI" id="CHEBI:29991"/>
    </ligand>
</feature>
<feature type="binding site" evidence="1">
    <location>
        <position position="122"/>
    </location>
    <ligand>
        <name>L-citrulline</name>
        <dbReference type="ChEBI" id="CHEBI:57743"/>
    </ligand>
</feature>
<feature type="binding site" evidence="1">
    <location>
        <position position="123"/>
    </location>
    <ligand>
        <name>L-aspartate</name>
        <dbReference type="ChEBI" id="CHEBI:29991"/>
    </ligand>
</feature>
<feature type="binding site" evidence="1">
    <location>
        <position position="126"/>
    </location>
    <ligand>
        <name>L-citrulline</name>
        <dbReference type="ChEBI" id="CHEBI:57743"/>
    </ligand>
</feature>
<feature type="binding site" evidence="1">
    <location>
        <position position="174"/>
    </location>
    <ligand>
        <name>L-citrulline</name>
        <dbReference type="ChEBI" id="CHEBI:57743"/>
    </ligand>
</feature>
<feature type="binding site" evidence="1">
    <location>
        <position position="183"/>
    </location>
    <ligand>
        <name>L-citrulline</name>
        <dbReference type="ChEBI" id="CHEBI:57743"/>
    </ligand>
</feature>
<feature type="binding site" evidence="1">
    <location>
        <position position="259"/>
    </location>
    <ligand>
        <name>L-citrulline</name>
        <dbReference type="ChEBI" id="CHEBI:57743"/>
    </ligand>
</feature>
<feature type="binding site" evidence="1">
    <location>
        <position position="271"/>
    </location>
    <ligand>
        <name>L-citrulline</name>
        <dbReference type="ChEBI" id="CHEBI:57743"/>
    </ligand>
</feature>
<proteinExistence type="inferred from homology"/>
<evidence type="ECO:0000255" key="1">
    <source>
        <dbReference type="HAMAP-Rule" id="MF_00005"/>
    </source>
</evidence>
<keyword id="KW-0028">Amino-acid biosynthesis</keyword>
<keyword id="KW-0055">Arginine biosynthesis</keyword>
<keyword id="KW-0067">ATP-binding</keyword>
<keyword id="KW-0963">Cytoplasm</keyword>
<keyword id="KW-0436">Ligase</keyword>
<keyword id="KW-0547">Nucleotide-binding</keyword>
<name>ASSY_LISMH</name>
<protein>
    <recommendedName>
        <fullName evidence="1">Argininosuccinate synthase</fullName>
        <ecNumber evidence="1">6.3.4.5</ecNumber>
    </recommendedName>
    <alternativeName>
        <fullName evidence="1">Citrulline--aspartate ligase</fullName>
    </alternativeName>
</protein>
<organism>
    <name type="scientific">Listeria monocytogenes serotype 4a (strain HCC23)</name>
    <dbReference type="NCBI Taxonomy" id="552536"/>
    <lineage>
        <taxon>Bacteria</taxon>
        <taxon>Bacillati</taxon>
        <taxon>Bacillota</taxon>
        <taxon>Bacilli</taxon>
        <taxon>Bacillales</taxon>
        <taxon>Listeriaceae</taxon>
        <taxon>Listeria</taxon>
    </lineage>
</organism>
<gene>
    <name evidence="1" type="primary">argG</name>
    <name type="ordered locus">LMHCC_0459</name>
</gene>
<dbReference type="EC" id="6.3.4.5" evidence="1"/>
<dbReference type="EMBL" id="CP001175">
    <property type="protein sequence ID" value="ACK38816.1"/>
    <property type="molecule type" value="Genomic_DNA"/>
</dbReference>
<dbReference type="RefSeq" id="WP_003724518.1">
    <property type="nucleotide sequence ID" value="NC_011660.1"/>
</dbReference>
<dbReference type="SMR" id="B8DH28"/>
<dbReference type="KEGG" id="lmh:LMHCC_0459"/>
<dbReference type="HOGENOM" id="CLU_032784_4_2_9"/>
<dbReference type="UniPathway" id="UPA00068">
    <property type="reaction ID" value="UER00113"/>
</dbReference>
<dbReference type="GO" id="GO:0005737">
    <property type="term" value="C:cytoplasm"/>
    <property type="evidence" value="ECO:0007669"/>
    <property type="project" value="UniProtKB-SubCell"/>
</dbReference>
<dbReference type="GO" id="GO:0004055">
    <property type="term" value="F:argininosuccinate synthase activity"/>
    <property type="evidence" value="ECO:0007669"/>
    <property type="project" value="UniProtKB-UniRule"/>
</dbReference>
<dbReference type="GO" id="GO:0005524">
    <property type="term" value="F:ATP binding"/>
    <property type="evidence" value="ECO:0007669"/>
    <property type="project" value="UniProtKB-UniRule"/>
</dbReference>
<dbReference type="GO" id="GO:0000053">
    <property type="term" value="P:argininosuccinate metabolic process"/>
    <property type="evidence" value="ECO:0007669"/>
    <property type="project" value="TreeGrafter"/>
</dbReference>
<dbReference type="GO" id="GO:0006526">
    <property type="term" value="P:L-arginine biosynthetic process"/>
    <property type="evidence" value="ECO:0007669"/>
    <property type="project" value="UniProtKB-UniRule"/>
</dbReference>
<dbReference type="GO" id="GO:0000050">
    <property type="term" value="P:urea cycle"/>
    <property type="evidence" value="ECO:0007669"/>
    <property type="project" value="TreeGrafter"/>
</dbReference>
<dbReference type="CDD" id="cd01999">
    <property type="entry name" value="ASS"/>
    <property type="match status" value="1"/>
</dbReference>
<dbReference type="FunFam" id="1.20.5.470:FF:000002">
    <property type="entry name" value="Argininosuccinate synthase"/>
    <property type="match status" value="1"/>
</dbReference>
<dbReference type="FunFam" id="3.40.50.620:FF:000038">
    <property type="entry name" value="Argininosuccinate synthase"/>
    <property type="match status" value="1"/>
</dbReference>
<dbReference type="FunFam" id="3.90.1260.10:FF:000007">
    <property type="entry name" value="Argininosuccinate synthase"/>
    <property type="match status" value="1"/>
</dbReference>
<dbReference type="Gene3D" id="3.90.1260.10">
    <property type="entry name" value="Argininosuccinate synthetase, chain A, domain 2"/>
    <property type="match status" value="1"/>
</dbReference>
<dbReference type="Gene3D" id="3.40.50.620">
    <property type="entry name" value="HUPs"/>
    <property type="match status" value="1"/>
</dbReference>
<dbReference type="Gene3D" id="1.20.5.470">
    <property type="entry name" value="Single helix bin"/>
    <property type="match status" value="1"/>
</dbReference>
<dbReference type="HAMAP" id="MF_00005">
    <property type="entry name" value="Arg_succ_synth_type1"/>
    <property type="match status" value="1"/>
</dbReference>
<dbReference type="InterPro" id="IPR048268">
    <property type="entry name" value="Arginosuc_syn_C"/>
</dbReference>
<dbReference type="InterPro" id="IPR048267">
    <property type="entry name" value="Arginosuc_syn_N"/>
</dbReference>
<dbReference type="InterPro" id="IPR001518">
    <property type="entry name" value="Arginosuc_synth"/>
</dbReference>
<dbReference type="InterPro" id="IPR018223">
    <property type="entry name" value="Arginosuc_synth_CS"/>
</dbReference>
<dbReference type="InterPro" id="IPR023434">
    <property type="entry name" value="Arginosuc_synth_type_1_subfam"/>
</dbReference>
<dbReference type="InterPro" id="IPR024074">
    <property type="entry name" value="AS_cat/multimer_dom_body"/>
</dbReference>
<dbReference type="InterPro" id="IPR014729">
    <property type="entry name" value="Rossmann-like_a/b/a_fold"/>
</dbReference>
<dbReference type="NCBIfam" id="TIGR00032">
    <property type="entry name" value="argG"/>
    <property type="match status" value="1"/>
</dbReference>
<dbReference type="NCBIfam" id="NF001770">
    <property type="entry name" value="PRK00509.1"/>
    <property type="match status" value="1"/>
</dbReference>
<dbReference type="PANTHER" id="PTHR11587">
    <property type="entry name" value="ARGININOSUCCINATE SYNTHASE"/>
    <property type="match status" value="1"/>
</dbReference>
<dbReference type="PANTHER" id="PTHR11587:SF2">
    <property type="entry name" value="ARGININOSUCCINATE SYNTHASE"/>
    <property type="match status" value="1"/>
</dbReference>
<dbReference type="Pfam" id="PF20979">
    <property type="entry name" value="Arginosuc_syn_C"/>
    <property type="match status" value="1"/>
</dbReference>
<dbReference type="Pfam" id="PF00764">
    <property type="entry name" value="Arginosuc_synth"/>
    <property type="match status" value="1"/>
</dbReference>
<dbReference type="SUPFAM" id="SSF52402">
    <property type="entry name" value="Adenine nucleotide alpha hydrolases-like"/>
    <property type="match status" value="1"/>
</dbReference>
<dbReference type="SUPFAM" id="SSF69864">
    <property type="entry name" value="Argininosuccinate synthetase, C-terminal domain"/>
    <property type="match status" value="1"/>
</dbReference>
<dbReference type="PROSITE" id="PS00564">
    <property type="entry name" value="ARGININOSUCCIN_SYN_1"/>
    <property type="match status" value="1"/>
</dbReference>
<dbReference type="PROSITE" id="PS00565">
    <property type="entry name" value="ARGININOSUCCIN_SYN_2"/>
    <property type="match status" value="1"/>
</dbReference>
<comment type="catalytic activity">
    <reaction evidence="1">
        <text>L-citrulline + L-aspartate + ATP = 2-(N(omega)-L-arginino)succinate + AMP + diphosphate + H(+)</text>
        <dbReference type="Rhea" id="RHEA:10932"/>
        <dbReference type="ChEBI" id="CHEBI:15378"/>
        <dbReference type="ChEBI" id="CHEBI:29991"/>
        <dbReference type="ChEBI" id="CHEBI:30616"/>
        <dbReference type="ChEBI" id="CHEBI:33019"/>
        <dbReference type="ChEBI" id="CHEBI:57472"/>
        <dbReference type="ChEBI" id="CHEBI:57743"/>
        <dbReference type="ChEBI" id="CHEBI:456215"/>
        <dbReference type="EC" id="6.3.4.5"/>
    </reaction>
</comment>
<comment type="pathway">
    <text evidence="1">Amino-acid biosynthesis; L-arginine biosynthesis; L-arginine from L-ornithine and carbamoyl phosphate: step 2/3.</text>
</comment>
<comment type="subunit">
    <text evidence="1">Homotetramer.</text>
</comment>
<comment type="subcellular location">
    <subcellularLocation>
        <location evidence="1">Cytoplasm</location>
    </subcellularLocation>
</comment>
<comment type="similarity">
    <text evidence="1">Belongs to the argininosuccinate synthase family. Type 1 subfamily.</text>
</comment>
<sequence>MAKEKIVLAYSGGLDTSVAIQWLVESGYEVIACCLDVGEGKNLDFIKEKAITVGASESYTIDAKEEFAEDFALIALQAHAYYEGKYPLISALSRPLIAKKLVEVARQEGASAIAHGCTGKGNDQVRFEVAIHALAPDLKVVSPVRDWKWSREEEINYAKEHNIPVPIDLDNPFSIDQNLWGRSNECGVLENPWTTPPEAAYDLTVSLEDAPDTPDIVEITFDAGIPISLNGENMSLANLILTLNEIAGKHGVGRIDHIENRLVGIKSREVYECPAAVTLITAHKELEDLTFVREVAHFKPIIEQKISETIYNGLWFSPLTEALVAFLKSTQKFVNGTIRVKLFKGHAIVEGRKSPNSLYDENLATYTSSDTFDQDAAVGFIKLWGLPTKVSAEVNSKVTITTEV</sequence>
<reference key="1">
    <citation type="journal article" date="2011" name="J. Bacteriol.">
        <title>Genome sequence of lineage III Listeria monocytogenes strain HCC23.</title>
        <authorList>
            <person name="Steele C.L."/>
            <person name="Donaldson J.R."/>
            <person name="Paul D."/>
            <person name="Banes M.M."/>
            <person name="Arick T."/>
            <person name="Bridges S.M."/>
            <person name="Lawrence M.L."/>
        </authorList>
    </citation>
    <scope>NUCLEOTIDE SEQUENCE [LARGE SCALE GENOMIC DNA]</scope>
    <source>
        <strain>HCC23</strain>
    </source>
</reference>